<sequence>MNGPDTKIPQATAKRLPLYYRFIQSLYNSGKLRVSSAELSEAVKVDSATIRRDFSYFGALGKKGYGYNVQHLLTFFRKTLNQDEVTNVALIGVGHLGTAFANYNFLKNNSTRIVIAFDADEDKVGTTTQDVPIYHVSDMKEQIKANHVDVAILTVPSQFAQSVADELVEYGVTGILNFTPARLNVPAHVRVHHIDLSIELQSLVYFMKHYSQSAEGVKS</sequence>
<name>REX_EXIS2</name>
<evidence type="ECO:0000255" key="1">
    <source>
        <dbReference type="HAMAP-Rule" id="MF_01131"/>
    </source>
</evidence>
<accession>B1YF09</accession>
<proteinExistence type="inferred from homology"/>
<keyword id="KW-0963">Cytoplasm</keyword>
<keyword id="KW-0238">DNA-binding</keyword>
<keyword id="KW-0520">NAD</keyword>
<keyword id="KW-1185">Reference proteome</keyword>
<keyword id="KW-0678">Repressor</keyword>
<keyword id="KW-0804">Transcription</keyword>
<keyword id="KW-0805">Transcription regulation</keyword>
<protein>
    <recommendedName>
        <fullName evidence="1">Redox-sensing transcriptional repressor Rex</fullName>
    </recommendedName>
</protein>
<comment type="function">
    <text evidence="1">Modulates transcription in response to changes in cellular NADH/NAD(+) redox state.</text>
</comment>
<comment type="subunit">
    <text evidence="1">Homodimer.</text>
</comment>
<comment type="subcellular location">
    <subcellularLocation>
        <location evidence="1">Cytoplasm</location>
    </subcellularLocation>
</comment>
<comment type="similarity">
    <text evidence="1">Belongs to the transcriptional regulatory Rex family.</text>
</comment>
<organism>
    <name type="scientific">Exiguobacterium sibiricum (strain DSM 17290 / CCUG 55495 / CIP 109462 / JCM 13490 / 255-15)</name>
    <dbReference type="NCBI Taxonomy" id="262543"/>
    <lineage>
        <taxon>Bacteria</taxon>
        <taxon>Bacillati</taxon>
        <taxon>Bacillota</taxon>
        <taxon>Bacilli</taxon>
        <taxon>Bacillales</taxon>
        <taxon>Bacillales Family XII. Incertae Sedis</taxon>
        <taxon>Exiguobacterium</taxon>
    </lineage>
</organism>
<gene>
    <name evidence="1" type="primary">rex</name>
    <name type="ordered locus">Exig_2787</name>
</gene>
<dbReference type="EMBL" id="CP001022">
    <property type="protein sequence ID" value="ACB62233.1"/>
    <property type="molecule type" value="Genomic_DNA"/>
</dbReference>
<dbReference type="RefSeq" id="WP_012371649.1">
    <property type="nucleotide sequence ID" value="NC_010556.1"/>
</dbReference>
<dbReference type="SMR" id="B1YF09"/>
<dbReference type="STRING" id="262543.Exig_2787"/>
<dbReference type="KEGG" id="esi:Exig_2787"/>
<dbReference type="eggNOG" id="COG2344">
    <property type="taxonomic scope" value="Bacteria"/>
</dbReference>
<dbReference type="HOGENOM" id="CLU_061534_1_1_9"/>
<dbReference type="OrthoDB" id="9784760at2"/>
<dbReference type="Proteomes" id="UP000001681">
    <property type="component" value="Chromosome"/>
</dbReference>
<dbReference type="GO" id="GO:0005737">
    <property type="term" value="C:cytoplasm"/>
    <property type="evidence" value="ECO:0007669"/>
    <property type="project" value="UniProtKB-SubCell"/>
</dbReference>
<dbReference type="GO" id="GO:0003677">
    <property type="term" value="F:DNA binding"/>
    <property type="evidence" value="ECO:0007669"/>
    <property type="project" value="UniProtKB-UniRule"/>
</dbReference>
<dbReference type="GO" id="GO:0003700">
    <property type="term" value="F:DNA-binding transcription factor activity"/>
    <property type="evidence" value="ECO:0007669"/>
    <property type="project" value="UniProtKB-UniRule"/>
</dbReference>
<dbReference type="GO" id="GO:0045892">
    <property type="term" value="P:negative regulation of DNA-templated transcription"/>
    <property type="evidence" value="ECO:0007669"/>
    <property type="project" value="InterPro"/>
</dbReference>
<dbReference type="GO" id="GO:0051775">
    <property type="term" value="P:response to redox state"/>
    <property type="evidence" value="ECO:0007669"/>
    <property type="project" value="InterPro"/>
</dbReference>
<dbReference type="Gene3D" id="3.40.50.720">
    <property type="entry name" value="NAD(P)-binding Rossmann-like Domain"/>
    <property type="match status" value="1"/>
</dbReference>
<dbReference type="Gene3D" id="1.10.10.10">
    <property type="entry name" value="Winged helix-like DNA-binding domain superfamily/Winged helix DNA-binding domain"/>
    <property type="match status" value="1"/>
</dbReference>
<dbReference type="HAMAP" id="MF_01131">
    <property type="entry name" value="Rex"/>
    <property type="match status" value="1"/>
</dbReference>
<dbReference type="InterPro" id="IPR003781">
    <property type="entry name" value="CoA-bd"/>
</dbReference>
<dbReference type="InterPro" id="IPR036291">
    <property type="entry name" value="NAD(P)-bd_dom_sf"/>
</dbReference>
<dbReference type="InterPro" id="IPR009718">
    <property type="entry name" value="Rex_DNA-bd_C_dom"/>
</dbReference>
<dbReference type="InterPro" id="IPR022876">
    <property type="entry name" value="Tscrpt_rep_Rex"/>
</dbReference>
<dbReference type="InterPro" id="IPR036388">
    <property type="entry name" value="WH-like_DNA-bd_sf"/>
</dbReference>
<dbReference type="InterPro" id="IPR036390">
    <property type="entry name" value="WH_DNA-bd_sf"/>
</dbReference>
<dbReference type="NCBIfam" id="NF003989">
    <property type="entry name" value="PRK05472.1-3"/>
    <property type="match status" value="1"/>
</dbReference>
<dbReference type="NCBIfam" id="NF003991">
    <property type="entry name" value="PRK05472.1-5"/>
    <property type="match status" value="1"/>
</dbReference>
<dbReference type="NCBIfam" id="NF003994">
    <property type="entry name" value="PRK05472.2-3"/>
    <property type="match status" value="1"/>
</dbReference>
<dbReference type="NCBIfam" id="NF003995">
    <property type="entry name" value="PRK05472.2-4"/>
    <property type="match status" value="1"/>
</dbReference>
<dbReference type="NCBIfam" id="NF003996">
    <property type="entry name" value="PRK05472.2-5"/>
    <property type="match status" value="1"/>
</dbReference>
<dbReference type="PANTHER" id="PTHR35786">
    <property type="entry name" value="REDOX-SENSING TRANSCRIPTIONAL REPRESSOR REX"/>
    <property type="match status" value="1"/>
</dbReference>
<dbReference type="PANTHER" id="PTHR35786:SF1">
    <property type="entry name" value="REDOX-SENSING TRANSCRIPTIONAL REPRESSOR REX 1"/>
    <property type="match status" value="1"/>
</dbReference>
<dbReference type="Pfam" id="PF02629">
    <property type="entry name" value="CoA_binding"/>
    <property type="match status" value="1"/>
</dbReference>
<dbReference type="Pfam" id="PF06971">
    <property type="entry name" value="Put_DNA-bind_N"/>
    <property type="match status" value="1"/>
</dbReference>
<dbReference type="SMART" id="SM00881">
    <property type="entry name" value="CoA_binding"/>
    <property type="match status" value="1"/>
</dbReference>
<dbReference type="SUPFAM" id="SSF51735">
    <property type="entry name" value="NAD(P)-binding Rossmann-fold domains"/>
    <property type="match status" value="1"/>
</dbReference>
<dbReference type="SUPFAM" id="SSF46785">
    <property type="entry name" value="Winged helix' DNA-binding domain"/>
    <property type="match status" value="1"/>
</dbReference>
<reference key="1">
    <citation type="submission" date="2008-04" db="EMBL/GenBank/DDBJ databases">
        <title>Complete sequence of chromosome of Exiguobacterium sibiricum 255-15.</title>
        <authorList>
            <consortium name="US DOE Joint Genome Institute"/>
            <person name="Copeland A."/>
            <person name="Lucas S."/>
            <person name="Lapidus A."/>
            <person name="Glavina del Rio T."/>
            <person name="Dalin E."/>
            <person name="Tice H."/>
            <person name="Bruce D."/>
            <person name="Goodwin L."/>
            <person name="Pitluck S."/>
            <person name="Kiss H."/>
            <person name="Chertkov O."/>
            <person name="Monk C."/>
            <person name="Brettin T."/>
            <person name="Detter J.C."/>
            <person name="Han C."/>
            <person name="Kuske C.R."/>
            <person name="Schmutz J."/>
            <person name="Larimer F."/>
            <person name="Land M."/>
            <person name="Hauser L."/>
            <person name="Kyrpides N."/>
            <person name="Mikhailova N."/>
            <person name="Vishnivetskaya T."/>
            <person name="Rodrigues D.F."/>
            <person name="Gilichinsky D."/>
            <person name="Tiedje J."/>
            <person name="Richardson P."/>
        </authorList>
    </citation>
    <scope>NUCLEOTIDE SEQUENCE [LARGE SCALE GENOMIC DNA]</scope>
    <source>
        <strain>DSM 17290 / CCUG 55495 / CIP 109462 / JCM 13490 / 255-15</strain>
    </source>
</reference>
<feature type="chain" id="PRO_1000137325" description="Redox-sensing transcriptional repressor Rex">
    <location>
        <begin position="1"/>
        <end position="219"/>
    </location>
</feature>
<feature type="DNA-binding region" description="H-T-H motif" evidence="1">
    <location>
        <begin position="18"/>
        <end position="57"/>
    </location>
</feature>
<feature type="binding site" evidence="1">
    <location>
        <begin position="92"/>
        <end position="97"/>
    </location>
    <ligand>
        <name>NAD(+)</name>
        <dbReference type="ChEBI" id="CHEBI:57540"/>
    </ligand>
</feature>